<name>NU3C_SYNPW</name>
<accession>A5GIB3</accession>
<feature type="chain" id="PRO_0000362794" description="NAD(P)H-quinone oxidoreductase subunit 3">
    <location>
        <begin position="1"/>
        <end position="120"/>
    </location>
</feature>
<feature type="transmembrane region" description="Helical" evidence="1">
    <location>
        <begin position="6"/>
        <end position="26"/>
    </location>
</feature>
<feature type="transmembrane region" description="Helical" evidence="1">
    <location>
        <begin position="64"/>
        <end position="84"/>
    </location>
</feature>
<feature type="transmembrane region" description="Helical" evidence="1">
    <location>
        <begin position="89"/>
        <end position="109"/>
    </location>
</feature>
<proteinExistence type="inferred from homology"/>
<gene>
    <name evidence="1" type="primary">ndhC</name>
    <name type="ordered locus">SynWH7803_0252</name>
</gene>
<reference key="1">
    <citation type="submission" date="2006-05" db="EMBL/GenBank/DDBJ databases">
        <authorList>
            <consortium name="Genoscope"/>
        </authorList>
    </citation>
    <scope>NUCLEOTIDE SEQUENCE [LARGE SCALE GENOMIC DNA]</scope>
    <source>
        <strain>WH7803</strain>
    </source>
</reference>
<protein>
    <recommendedName>
        <fullName evidence="1">NAD(P)H-quinone oxidoreductase subunit 3</fullName>
        <ecNumber evidence="1">7.1.1.-</ecNumber>
    </recommendedName>
    <alternativeName>
        <fullName evidence="1">NAD(P)H dehydrogenase subunit 3</fullName>
    </alternativeName>
    <alternativeName>
        <fullName evidence="1">NADH-plastoquinone oxidoreductase subunit 3</fullName>
    </alternativeName>
    <alternativeName>
        <fullName evidence="1">NDH-1 subunit 3</fullName>
        <shortName evidence="1">NDH-C</shortName>
    </alternativeName>
</protein>
<comment type="function">
    <text evidence="1">NDH-1 shuttles electrons from an unknown electron donor, via FMN and iron-sulfur (Fe-S) centers, to quinones in the respiratory and/or the photosynthetic chain. The immediate electron acceptor for the enzyme in this species is believed to be plastoquinone. Couples the redox reaction to proton translocation, and thus conserves the redox energy in a proton gradient. Cyanobacterial NDH-1 also plays a role in inorganic carbon-concentration.</text>
</comment>
<comment type="catalytic activity">
    <reaction evidence="1">
        <text>a plastoquinone + NADH + (n+1) H(+)(in) = a plastoquinol + NAD(+) + n H(+)(out)</text>
        <dbReference type="Rhea" id="RHEA:42608"/>
        <dbReference type="Rhea" id="RHEA-COMP:9561"/>
        <dbReference type="Rhea" id="RHEA-COMP:9562"/>
        <dbReference type="ChEBI" id="CHEBI:15378"/>
        <dbReference type="ChEBI" id="CHEBI:17757"/>
        <dbReference type="ChEBI" id="CHEBI:57540"/>
        <dbReference type="ChEBI" id="CHEBI:57945"/>
        <dbReference type="ChEBI" id="CHEBI:62192"/>
    </reaction>
</comment>
<comment type="catalytic activity">
    <reaction evidence="1">
        <text>a plastoquinone + NADPH + (n+1) H(+)(in) = a plastoquinol + NADP(+) + n H(+)(out)</text>
        <dbReference type="Rhea" id="RHEA:42612"/>
        <dbReference type="Rhea" id="RHEA-COMP:9561"/>
        <dbReference type="Rhea" id="RHEA-COMP:9562"/>
        <dbReference type="ChEBI" id="CHEBI:15378"/>
        <dbReference type="ChEBI" id="CHEBI:17757"/>
        <dbReference type="ChEBI" id="CHEBI:57783"/>
        <dbReference type="ChEBI" id="CHEBI:58349"/>
        <dbReference type="ChEBI" id="CHEBI:62192"/>
    </reaction>
</comment>
<comment type="subunit">
    <text evidence="1">NDH-1 can be composed of about 15 different subunits; different subcomplexes with different compositions have been identified which probably have different functions.</text>
</comment>
<comment type="subcellular location">
    <subcellularLocation>
        <location evidence="1">Cellular thylakoid membrane</location>
        <topology evidence="1">Multi-pass membrane protein</topology>
    </subcellularLocation>
</comment>
<comment type="similarity">
    <text evidence="1">Belongs to the complex I subunit 3 family.</text>
</comment>
<evidence type="ECO:0000255" key="1">
    <source>
        <dbReference type="HAMAP-Rule" id="MF_01394"/>
    </source>
</evidence>
<organism>
    <name type="scientific">Synechococcus sp. (strain WH7803)</name>
    <dbReference type="NCBI Taxonomy" id="32051"/>
    <lineage>
        <taxon>Bacteria</taxon>
        <taxon>Bacillati</taxon>
        <taxon>Cyanobacteriota</taxon>
        <taxon>Cyanophyceae</taxon>
        <taxon>Synechococcales</taxon>
        <taxon>Synechococcaceae</taxon>
        <taxon>Synechococcus</taxon>
    </lineage>
</organism>
<keyword id="KW-0472">Membrane</keyword>
<keyword id="KW-0520">NAD</keyword>
<keyword id="KW-0521">NADP</keyword>
<keyword id="KW-0618">Plastoquinone</keyword>
<keyword id="KW-0874">Quinone</keyword>
<keyword id="KW-1185">Reference proteome</keyword>
<keyword id="KW-0793">Thylakoid</keyword>
<keyword id="KW-1278">Translocase</keyword>
<keyword id="KW-0812">Transmembrane</keyword>
<keyword id="KW-1133">Transmembrane helix</keyword>
<keyword id="KW-0813">Transport</keyword>
<dbReference type="EC" id="7.1.1.-" evidence="1"/>
<dbReference type="EMBL" id="CT971583">
    <property type="protein sequence ID" value="CAK22678.1"/>
    <property type="molecule type" value="Genomic_DNA"/>
</dbReference>
<dbReference type="SMR" id="A5GIB3"/>
<dbReference type="STRING" id="32051.SynWH7803_0252"/>
<dbReference type="KEGG" id="syx:SynWH7803_0252"/>
<dbReference type="eggNOG" id="COG0838">
    <property type="taxonomic scope" value="Bacteria"/>
</dbReference>
<dbReference type="HOGENOM" id="CLU_119549_1_1_3"/>
<dbReference type="OrthoDB" id="9791970at2"/>
<dbReference type="Proteomes" id="UP000001566">
    <property type="component" value="Chromosome"/>
</dbReference>
<dbReference type="GO" id="GO:0030964">
    <property type="term" value="C:NADH dehydrogenase complex"/>
    <property type="evidence" value="ECO:0007669"/>
    <property type="project" value="TreeGrafter"/>
</dbReference>
<dbReference type="GO" id="GO:0031676">
    <property type="term" value="C:plasma membrane-derived thylakoid membrane"/>
    <property type="evidence" value="ECO:0007669"/>
    <property type="project" value="UniProtKB-SubCell"/>
</dbReference>
<dbReference type="GO" id="GO:0008137">
    <property type="term" value="F:NADH dehydrogenase (ubiquinone) activity"/>
    <property type="evidence" value="ECO:0007669"/>
    <property type="project" value="InterPro"/>
</dbReference>
<dbReference type="GO" id="GO:0048038">
    <property type="term" value="F:quinone binding"/>
    <property type="evidence" value="ECO:0007669"/>
    <property type="project" value="UniProtKB-KW"/>
</dbReference>
<dbReference type="GO" id="GO:0019684">
    <property type="term" value="P:photosynthesis, light reaction"/>
    <property type="evidence" value="ECO:0007669"/>
    <property type="project" value="UniProtKB-UniRule"/>
</dbReference>
<dbReference type="Gene3D" id="1.20.58.1610">
    <property type="entry name" value="NADH:ubiquinone/plastoquinone oxidoreductase, chain 3"/>
    <property type="match status" value="1"/>
</dbReference>
<dbReference type="HAMAP" id="MF_01394">
    <property type="entry name" value="NDH1_NuoA"/>
    <property type="match status" value="1"/>
</dbReference>
<dbReference type="InterPro" id="IPR023043">
    <property type="entry name" value="NAD(P)H_OxRDtase_bac/plastid"/>
</dbReference>
<dbReference type="InterPro" id="IPR000440">
    <property type="entry name" value="NADH_UbQ/plastoQ_OxRdtase_su3"/>
</dbReference>
<dbReference type="InterPro" id="IPR038430">
    <property type="entry name" value="NDAH_ubi_oxred_su3_sf"/>
</dbReference>
<dbReference type="PANTHER" id="PTHR11058">
    <property type="entry name" value="NADH-UBIQUINONE OXIDOREDUCTASE CHAIN 3"/>
    <property type="match status" value="1"/>
</dbReference>
<dbReference type="PANTHER" id="PTHR11058:SF9">
    <property type="entry name" value="NADH-UBIQUINONE OXIDOREDUCTASE CHAIN 3"/>
    <property type="match status" value="1"/>
</dbReference>
<dbReference type="Pfam" id="PF00507">
    <property type="entry name" value="Oxidored_q4"/>
    <property type="match status" value="1"/>
</dbReference>
<sequence length="120" mass="13522">MFVLPGYDAFLGFLLIAAAVPVLALVTNKLLAPRSQDGERQLTYESGMEPIGGAWIQFNIRYYMFALVFVIFDVETVFLYPWAVAFHRLGLLAFIEALIFIAILVVALAYAWRKGALEWS</sequence>